<organism>
    <name type="scientific">Cereibacter sphaeroides</name>
    <name type="common">Rhodobacter sphaeroides</name>
    <dbReference type="NCBI Taxonomy" id="1063"/>
    <lineage>
        <taxon>Bacteria</taxon>
        <taxon>Pseudomonadati</taxon>
        <taxon>Pseudomonadota</taxon>
        <taxon>Alphaproteobacteria</taxon>
        <taxon>Rhodobacterales</taxon>
        <taxon>Paracoccaceae</taxon>
        <taxon>Cereibacter</taxon>
    </lineage>
</organism>
<name>PMTA_CERSP</name>
<proteinExistence type="predicted"/>
<comment type="function">
    <text>This enzyme catalyzes three distinct methylation reactions for converting phosphatidylethanolamine to phosphatidylcholine.</text>
</comment>
<comment type="catalytic activity">
    <reaction>
        <text>a 1,2-diacyl-sn-glycero-3-phosphoethanolamine + S-adenosyl-L-methionine = a 1,2-diacyl-sn-glycero-3-phospho-N-methylethanolamine + S-adenosyl-L-homocysteine + H(+)</text>
        <dbReference type="Rhea" id="RHEA:11164"/>
        <dbReference type="ChEBI" id="CHEBI:15378"/>
        <dbReference type="ChEBI" id="CHEBI:57856"/>
        <dbReference type="ChEBI" id="CHEBI:59789"/>
        <dbReference type="ChEBI" id="CHEBI:64573"/>
        <dbReference type="ChEBI" id="CHEBI:64612"/>
        <dbReference type="EC" id="2.1.1.17"/>
    </reaction>
</comment>
<comment type="pathway">
    <text>Phospholipid metabolism; phosphatidylcholine biosynthesis.</text>
</comment>
<sequence length="203" mass="22892">MELDAVSRSYKRWAIYDFSFGKVSESPRRRTAAHVNARGGRVLEVGVGTGLSLPLYSHRVAVTGIDFSHEMLARAREKVEEMGLEPVKELRQMDARELDFPDETFDTVVAMFLVSVVPEPERVVSEMARVCRKGGEVVIVNHFARDKGPLAAVEKALARFENTLGWHSDFAIERVTADPRLEVVEQTPMSPGGLFTFLRFQRR</sequence>
<accession>Q05197</accession>
<gene>
    <name type="primary">pmtA</name>
</gene>
<reference key="1">
    <citation type="journal article" date="1993" name="J. Biol. Chem.">
        <title>Isolation and functional expression in Escherichia coli of a gene encoding phosphatidylethanolamine methyltransferase (EC 2.1.1.17) from Rhodobacter sphaeroides.</title>
        <authorList>
            <person name="Arondel V."/>
            <person name="Benning C."/>
            <person name="Somerville C.R."/>
        </authorList>
    </citation>
    <scope>NUCLEOTIDE SEQUENCE [GENOMIC DNA]</scope>
</reference>
<dbReference type="EC" id="2.1.1.17"/>
<dbReference type="EMBL" id="L07247">
    <property type="protein sequence ID" value="AAA26152.1"/>
    <property type="molecule type" value="Genomic_DNA"/>
</dbReference>
<dbReference type="PIR" id="A47149">
    <property type="entry name" value="A47149"/>
</dbReference>
<dbReference type="SMR" id="Q05197"/>
<dbReference type="UniPathway" id="UPA00753"/>
<dbReference type="GO" id="GO:0004608">
    <property type="term" value="F:phosphatidylethanolamine N-methyltransferase activity"/>
    <property type="evidence" value="ECO:0007669"/>
    <property type="project" value="UniProtKB-EC"/>
</dbReference>
<dbReference type="GO" id="GO:0032259">
    <property type="term" value="P:methylation"/>
    <property type="evidence" value="ECO:0007669"/>
    <property type="project" value="UniProtKB-KW"/>
</dbReference>
<dbReference type="GO" id="GO:0006656">
    <property type="term" value="P:phosphatidylcholine biosynthetic process"/>
    <property type="evidence" value="ECO:0007669"/>
    <property type="project" value="UniProtKB-UniPathway"/>
</dbReference>
<dbReference type="CDD" id="cd02440">
    <property type="entry name" value="AdoMet_MTases"/>
    <property type="match status" value="1"/>
</dbReference>
<dbReference type="Gene3D" id="3.40.50.150">
    <property type="entry name" value="Vaccinia Virus protein VP39"/>
    <property type="match status" value="1"/>
</dbReference>
<dbReference type="InterPro" id="IPR013216">
    <property type="entry name" value="Methyltransf_11"/>
</dbReference>
<dbReference type="InterPro" id="IPR050508">
    <property type="entry name" value="Methyltransf_Superfamily"/>
</dbReference>
<dbReference type="InterPro" id="IPR029063">
    <property type="entry name" value="SAM-dependent_MTases_sf"/>
</dbReference>
<dbReference type="PANTHER" id="PTHR42912">
    <property type="entry name" value="METHYLTRANSFERASE"/>
    <property type="match status" value="1"/>
</dbReference>
<dbReference type="Pfam" id="PF08241">
    <property type="entry name" value="Methyltransf_11"/>
    <property type="match status" value="1"/>
</dbReference>
<dbReference type="SUPFAM" id="SSF53335">
    <property type="entry name" value="S-adenosyl-L-methionine-dependent methyltransferases"/>
    <property type="match status" value="1"/>
</dbReference>
<feature type="chain" id="PRO_0000058470" description="Phosphatidylethanolamine N-methyltransferase">
    <location>
        <begin position="1"/>
        <end position="203"/>
    </location>
</feature>
<keyword id="KW-0444">Lipid biosynthesis</keyword>
<keyword id="KW-0443">Lipid metabolism</keyword>
<keyword id="KW-0489">Methyltransferase</keyword>
<keyword id="KW-0594">Phospholipid biosynthesis</keyword>
<keyword id="KW-1208">Phospholipid metabolism</keyword>
<keyword id="KW-0949">S-adenosyl-L-methionine</keyword>
<keyword id="KW-0808">Transferase</keyword>
<protein>
    <recommendedName>
        <fullName>Phosphatidylethanolamine N-methyltransferase</fullName>
        <ecNumber>2.1.1.17</ecNumber>
    </recommendedName>
</protein>